<name>PDXH_SALTI</name>
<evidence type="ECO:0000255" key="1">
    <source>
        <dbReference type="HAMAP-Rule" id="MF_01629"/>
    </source>
</evidence>
<comment type="function">
    <text evidence="1">Catalyzes the oxidation of either pyridoxine 5'-phosphate (PNP) or pyridoxamine 5'-phosphate (PMP) into pyridoxal 5'-phosphate (PLP).</text>
</comment>
<comment type="catalytic activity">
    <reaction evidence="1">
        <text>pyridoxamine 5'-phosphate + O2 + H2O = pyridoxal 5'-phosphate + H2O2 + NH4(+)</text>
        <dbReference type="Rhea" id="RHEA:15817"/>
        <dbReference type="ChEBI" id="CHEBI:15377"/>
        <dbReference type="ChEBI" id="CHEBI:15379"/>
        <dbReference type="ChEBI" id="CHEBI:16240"/>
        <dbReference type="ChEBI" id="CHEBI:28938"/>
        <dbReference type="ChEBI" id="CHEBI:58451"/>
        <dbReference type="ChEBI" id="CHEBI:597326"/>
        <dbReference type="EC" id="1.4.3.5"/>
    </reaction>
</comment>
<comment type="catalytic activity">
    <reaction evidence="1">
        <text>pyridoxine 5'-phosphate + O2 = pyridoxal 5'-phosphate + H2O2</text>
        <dbReference type="Rhea" id="RHEA:15149"/>
        <dbReference type="ChEBI" id="CHEBI:15379"/>
        <dbReference type="ChEBI" id="CHEBI:16240"/>
        <dbReference type="ChEBI" id="CHEBI:58589"/>
        <dbReference type="ChEBI" id="CHEBI:597326"/>
        <dbReference type="EC" id="1.4.3.5"/>
    </reaction>
</comment>
<comment type="cofactor">
    <cofactor evidence="1">
        <name>FMN</name>
        <dbReference type="ChEBI" id="CHEBI:58210"/>
    </cofactor>
    <text evidence="1">Binds 1 FMN per subunit.</text>
</comment>
<comment type="pathway">
    <text evidence="1">Cofactor metabolism; pyridoxal 5'-phosphate salvage; pyridoxal 5'-phosphate from pyridoxamine 5'-phosphate: step 1/1.</text>
</comment>
<comment type="pathway">
    <text evidence="1">Cofactor metabolism; pyridoxal 5'-phosphate salvage; pyridoxal 5'-phosphate from pyridoxine 5'-phosphate: step 1/1.</text>
</comment>
<comment type="subunit">
    <text evidence="1">Homodimer.</text>
</comment>
<comment type="similarity">
    <text evidence="1">Belongs to the pyridoxamine 5'-phosphate oxidase family.</text>
</comment>
<protein>
    <recommendedName>
        <fullName evidence="1">Pyridoxine/pyridoxamine 5'-phosphate oxidase</fullName>
        <ecNumber evidence="1">1.4.3.5</ecNumber>
    </recommendedName>
    <alternativeName>
        <fullName evidence="1">PNP/PMP oxidase</fullName>
        <shortName evidence="1">PNPOx</shortName>
    </alternativeName>
    <alternativeName>
        <fullName evidence="1">Pyridoxal 5'-phosphate synthase</fullName>
    </alternativeName>
</protein>
<reference key="1">
    <citation type="journal article" date="2001" name="Nature">
        <title>Complete genome sequence of a multiple drug resistant Salmonella enterica serovar Typhi CT18.</title>
        <authorList>
            <person name="Parkhill J."/>
            <person name="Dougan G."/>
            <person name="James K.D."/>
            <person name="Thomson N.R."/>
            <person name="Pickard D."/>
            <person name="Wain J."/>
            <person name="Churcher C.M."/>
            <person name="Mungall K.L."/>
            <person name="Bentley S.D."/>
            <person name="Holden M.T.G."/>
            <person name="Sebaihia M."/>
            <person name="Baker S."/>
            <person name="Basham D."/>
            <person name="Brooks K."/>
            <person name="Chillingworth T."/>
            <person name="Connerton P."/>
            <person name="Cronin A."/>
            <person name="Davis P."/>
            <person name="Davies R.M."/>
            <person name="Dowd L."/>
            <person name="White N."/>
            <person name="Farrar J."/>
            <person name="Feltwell T."/>
            <person name="Hamlin N."/>
            <person name="Haque A."/>
            <person name="Hien T.T."/>
            <person name="Holroyd S."/>
            <person name="Jagels K."/>
            <person name="Krogh A."/>
            <person name="Larsen T.S."/>
            <person name="Leather S."/>
            <person name="Moule S."/>
            <person name="O'Gaora P."/>
            <person name="Parry C."/>
            <person name="Quail M.A."/>
            <person name="Rutherford K.M."/>
            <person name="Simmonds M."/>
            <person name="Skelton J."/>
            <person name="Stevens K."/>
            <person name="Whitehead S."/>
            <person name="Barrell B.G."/>
        </authorList>
    </citation>
    <scope>NUCLEOTIDE SEQUENCE [LARGE SCALE GENOMIC DNA]</scope>
    <source>
        <strain>CT18</strain>
    </source>
</reference>
<reference key="2">
    <citation type="journal article" date="2003" name="J. Bacteriol.">
        <title>Comparative genomics of Salmonella enterica serovar Typhi strains Ty2 and CT18.</title>
        <authorList>
            <person name="Deng W."/>
            <person name="Liou S.-R."/>
            <person name="Plunkett G. III"/>
            <person name="Mayhew G.F."/>
            <person name="Rose D.J."/>
            <person name="Burland V."/>
            <person name="Kodoyianni V."/>
            <person name="Schwartz D.C."/>
            <person name="Blattner F.R."/>
        </authorList>
    </citation>
    <scope>NUCLEOTIDE SEQUENCE [LARGE SCALE GENOMIC DNA]</scope>
    <source>
        <strain>ATCC 700931 / Ty2</strain>
    </source>
</reference>
<keyword id="KW-0285">Flavoprotein</keyword>
<keyword id="KW-0288">FMN</keyword>
<keyword id="KW-0560">Oxidoreductase</keyword>
<keyword id="KW-0664">Pyridoxine biosynthesis</keyword>
<dbReference type="EC" id="1.4.3.5" evidence="1"/>
<dbReference type="EMBL" id="AL513382">
    <property type="protein sequence ID" value="CAD01919.1"/>
    <property type="molecule type" value="Genomic_DNA"/>
</dbReference>
<dbReference type="EMBL" id="AE014613">
    <property type="protein sequence ID" value="AAO68966.1"/>
    <property type="molecule type" value="Genomic_DNA"/>
</dbReference>
<dbReference type="RefSeq" id="NP_456082.1">
    <property type="nucleotide sequence ID" value="NC_003198.1"/>
</dbReference>
<dbReference type="RefSeq" id="WP_001282834.1">
    <property type="nucleotide sequence ID" value="NZ_WSUR01000011.1"/>
</dbReference>
<dbReference type="SMR" id="Q8Z6Q2"/>
<dbReference type="STRING" id="220341.gene:17585609"/>
<dbReference type="KEGG" id="stt:t1316"/>
<dbReference type="KEGG" id="sty:STY1674"/>
<dbReference type="PATRIC" id="fig|220341.7.peg.1684"/>
<dbReference type="eggNOG" id="COG0259">
    <property type="taxonomic scope" value="Bacteria"/>
</dbReference>
<dbReference type="HOGENOM" id="CLU_032263_2_2_6"/>
<dbReference type="OMA" id="AYFRTRP"/>
<dbReference type="OrthoDB" id="9780392at2"/>
<dbReference type="UniPathway" id="UPA01068">
    <property type="reaction ID" value="UER00304"/>
</dbReference>
<dbReference type="UniPathway" id="UPA01068">
    <property type="reaction ID" value="UER00305"/>
</dbReference>
<dbReference type="Proteomes" id="UP000000541">
    <property type="component" value="Chromosome"/>
</dbReference>
<dbReference type="Proteomes" id="UP000002670">
    <property type="component" value="Chromosome"/>
</dbReference>
<dbReference type="GO" id="GO:0010181">
    <property type="term" value="F:FMN binding"/>
    <property type="evidence" value="ECO:0007669"/>
    <property type="project" value="UniProtKB-UniRule"/>
</dbReference>
<dbReference type="GO" id="GO:0004733">
    <property type="term" value="F:pyridoxamine phosphate oxidase activity"/>
    <property type="evidence" value="ECO:0007669"/>
    <property type="project" value="UniProtKB-UniRule"/>
</dbReference>
<dbReference type="GO" id="GO:0008615">
    <property type="term" value="P:pyridoxine biosynthetic process"/>
    <property type="evidence" value="ECO:0007669"/>
    <property type="project" value="UniProtKB-KW"/>
</dbReference>
<dbReference type="FunFam" id="2.30.110.10:FF:000001">
    <property type="entry name" value="Pyridoxine/pyridoxamine 5'-phosphate oxidase"/>
    <property type="match status" value="1"/>
</dbReference>
<dbReference type="Gene3D" id="2.30.110.10">
    <property type="entry name" value="Electron Transport, Fmn-binding Protein, Chain A"/>
    <property type="match status" value="1"/>
</dbReference>
<dbReference type="HAMAP" id="MF_01629">
    <property type="entry name" value="PdxH"/>
    <property type="match status" value="1"/>
</dbReference>
<dbReference type="InterPro" id="IPR000659">
    <property type="entry name" value="Pyridox_Oxase"/>
</dbReference>
<dbReference type="InterPro" id="IPR019740">
    <property type="entry name" value="Pyridox_Oxase_CS"/>
</dbReference>
<dbReference type="InterPro" id="IPR011576">
    <property type="entry name" value="Pyridox_Oxase_N"/>
</dbReference>
<dbReference type="InterPro" id="IPR019576">
    <property type="entry name" value="Pyridoxamine_oxidase_dimer_C"/>
</dbReference>
<dbReference type="InterPro" id="IPR012349">
    <property type="entry name" value="Split_barrel_FMN-bd"/>
</dbReference>
<dbReference type="NCBIfam" id="TIGR00558">
    <property type="entry name" value="pdxH"/>
    <property type="match status" value="1"/>
</dbReference>
<dbReference type="NCBIfam" id="NF004231">
    <property type="entry name" value="PRK05679.1"/>
    <property type="match status" value="1"/>
</dbReference>
<dbReference type="PANTHER" id="PTHR10851:SF0">
    <property type="entry name" value="PYRIDOXINE-5'-PHOSPHATE OXIDASE"/>
    <property type="match status" value="1"/>
</dbReference>
<dbReference type="PANTHER" id="PTHR10851">
    <property type="entry name" value="PYRIDOXINE-5-PHOSPHATE OXIDASE"/>
    <property type="match status" value="1"/>
</dbReference>
<dbReference type="Pfam" id="PF10590">
    <property type="entry name" value="PNP_phzG_C"/>
    <property type="match status" value="1"/>
</dbReference>
<dbReference type="Pfam" id="PF01243">
    <property type="entry name" value="PNPOx_N"/>
    <property type="match status" value="1"/>
</dbReference>
<dbReference type="PIRSF" id="PIRSF000190">
    <property type="entry name" value="Pyd_amn-ph_oxd"/>
    <property type="match status" value="1"/>
</dbReference>
<dbReference type="SUPFAM" id="SSF50475">
    <property type="entry name" value="FMN-binding split barrel"/>
    <property type="match status" value="1"/>
</dbReference>
<dbReference type="PROSITE" id="PS01064">
    <property type="entry name" value="PYRIDOX_OXIDASE"/>
    <property type="match status" value="1"/>
</dbReference>
<gene>
    <name evidence="1" type="primary">pdxH</name>
    <name type="ordered locus">STY1674</name>
    <name type="ordered locus">t1316</name>
</gene>
<sequence length="218" mass="25498">MSDNNQLQQIAHLRREYTKGGLRRRDLPAEPLTLFERWLGQACDARLADPTAMVVATVDDKGQPYQRIVLLKHYDEKGLVFYTNLGSRKAHQIEHNPRISLLFPWHMLERQVMVTGKAERLSTLEVVRYFHSRPRDSQIGAWVSKQSSRISARGILESKFLELKQKFQQGEVPLPSFWGGFRVSIEQMEFWQGGEHRLHDRFLYQRDDGAWKIDRLAP</sequence>
<accession>Q8Z6Q2</accession>
<accession>Q7CA20</accession>
<feature type="chain" id="PRO_0000167752" description="Pyridoxine/pyridoxamine 5'-phosphate oxidase">
    <location>
        <begin position="1"/>
        <end position="218"/>
    </location>
</feature>
<feature type="binding site" evidence="1">
    <location>
        <begin position="14"/>
        <end position="17"/>
    </location>
    <ligand>
        <name>substrate</name>
    </ligand>
</feature>
<feature type="binding site" evidence="1">
    <location>
        <begin position="67"/>
        <end position="72"/>
    </location>
    <ligand>
        <name>FMN</name>
        <dbReference type="ChEBI" id="CHEBI:58210"/>
    </ligand>
</feature>
<feature type="binding site" evidence="1">
    <location>
        <position position="72"/>
    </location>
    <ligand>
        <name>substrate</name>
    </ligand>
</feature>
<feature type="binding site" evidence="1">
    <location>
        <begin position="82"/>
        <end position="83"/>
    </location>
    <ligand>
        <name>FMN</name>
        <dbReference type="ChEBI" id="CHEBI:58210"/>
    </ligand>
</feature>
<feature type="binding site" evidence="1">
    <location>
        <position position="88"/>
    </location>
    <ligand>
        <name>FMN</name>
        <dbReference type="ChEBI" id="CHEBI:58210"/>
    </ligand>
</feature>
<feature type="binding site" evidence="1">
    <location>
        <position position="89"/>
    </location>
    <ligand>
        <name>FMN</name>
        <dbReference type="ChEBI" id="CHEBI:58210"/>
    </ligand>
</feature>
<feature type="binding site" evidence="1">
    <location>
        <position position="111"/>
    </location>
    <ligand>
        <name>FMN</name>
        <dbReference type="ChEBI" id="CHEBI:58210"/>
    </ligand>
</feature>
<feature type="binding site" evidence="1">
    <location>
        <position position="129"/>
    </location>
    <ligand>
        <name>substrate</name>
    </ligand>
</feature>
<feature type="binding site" evidence="1">
    <location>
        <position position="133"/>
    </location>
    <ligand>
        <name>substrate</name>
    </ligand>
</feature>
<feature type="binding site" evidence="1">
    <location>
        <position position="137"/>
    </location>
    <ligand>
        <name>substrate</name>
    </ligand>
</feature>
<feature type="binding site" evidence="1">
    <location>
        <begin position="146"/>
        <end position="147"/>
    </location>
    <ligand>
        <name>FMN</name>
        <dbReference type="ChEBI" id="CHEBI:58210"/>
    </ligand>
</feature>
<feature type="binding site" evidence="1">
    <location>
        <position position="191"/>
    </location>
    <ligand>
        <name>FMN</name>
        <dbReference type="ChEBI" id="CHEBI:58210"/>
    </ligand>
</feature>
<feature type="binding site" evidence="1">
    <location>
        <begin position="197"/>
        <end position="199"/>
    </location>
    <ligand>
        <name>substrate</name>
    </ligand>
</feature>
<feature type="binding site" evidence="1">
    <location>
        <position position="201"/>
    </location>
    <ligand>
        <name>FMN</name>
        <dbReference type="ChEBI" id="CHEBI:58210"/>
    </ligand>
</feature>
<organism>
    <name type="scientific">Salmonella typhi</name>
    <dbReference type="NCBI Taxonomy" id="90370"/>
    <lineage>
        <taxon>Bacteria</taxon>
        <taxon>Pseudomonadati</taxon>
        <taxon>Pseudomonadota</taxon>
        <taxon>Gammaproteobacteria</taxon>
        <taxon>Enterobacterales</taxon>
        <taxon>Enterobacteriaceae</taxon>
        <taxon>Salmonella</taxon>
    </lineage>
</organism>
<proteinExistence type="inferred from homology"/>